<reference key="1">
    <citation type="journal article" date="2007" name="Proc. Natl. Acad. Sci. U.S.A.">
        <title>Genome and proteome of long-chain alkane degrading Geobacillus thermodenitrificans NG80-2 isolated from a deep-subsurface oil reservoir.</title>
        <authorList>
            <person name="Feng L."/>
            <person name="Wang W."/>
            <person name="Cheng J."/>
            <person name="Ren Y."/>
            <person name="Zhao G."/>
            <person name="Gao C."/>
            <person name="Tang Y."/>
            <person name="Liu X."/>
            <person name="Han W."/>
            <person name="Peng X."/>
            <person name="Liu R."/>
            <person name="Wang L."/>
        </authorList>
    </citation>
    <scope>NUCLEOTIDE SEQUENCE [LARGE SCALE GENOMIC DNA]</scope>
    <source>
        <strain>NG80-2</strain>
    </source>
</reference>
<accession>A4IRC6</accession>
<evidence type="ECO:0000255" key="1">
    <source>
        <dbReference type="HAMAP-Rule" id="MF_00707"/>
    </source>
</evidence>
<evidence type="ECO:0000305" key="2"/>
<organism>
    <name type="scientific">Geobacillus thermodenitrificans (strain NG80-2)</name>
    <dbReference type="NCBI Taxonomy" id="420246"/>
    <lineage>
        <taxon>Bacteria</taxon>
        <taxon>Bacillati</taxon>
        <taxon>Bacillota</taxon>
        <taxon>Bacilli</taxon>
        <taxon>Bacillales</taxon>
        <taxon>Anoxybacillaceae</taxon>
        <taxon>Geobacillus</taxon>
    </lineage>
</organism>
<name>Y2535_GEOTN</name>
<sequence>MEKKFYLVREDILPEAMKKVVLAKQLLERKKAASVAEAAQLANISRGVFYKYRDAIFPFQAVTKENIVTLFFHLEDRSGTLSQLLSVVAAAGCNVLTIHQTIPLQGRANVTLSVSTNDMHEDIDELLAKLRGLEFVEKVEIVGSGVY</sequence>
<protein>
    <recommendedName>
        <fullName evidence="1">UPF0735 ACT domain-containing protein GTNG_2535</fullName>
    </recommendedName>
</protein>
<gene>
    <name type="ordered locus">GTNG_2535</name>
</gene>
<comment type="similarity">
    <text evidence="1">Belongs to the UPF0735 family.</text>
</comment>
<comment type="sequence caution" evidence="2">
    <conflict type="erroneous initiation">
        <sequence resource="EMBL-CDS" id="ABO67880"/>
    </conflict>
</comment>
<dbReference type="EMBL" id="CP000557">
    <property type="protein sequence ID" value="ABO67880.1"/>
    <property type="status" value="ALT_INIT"/>
    <property type="molecule type" value="Genomic_DNA"/>
</dbReference>
<dbReference type="RefSeq" id="WP_008881062.1">
    <property type="nucleotide sequence ID" value="NC_009328.1"/>
</dbReference>
<dbReference type="SMR" id="A4IRC6"/>
<dbReference type="GeneID" id="87623317"/>
<dbReference type="KEGG" id="gtn:GTNG_2535"/>
<dbReference type="eggNOG" id="COG4492">
    <property type="taxonomic scope" value="Bacteria"/>
</dbReference>
<dbReference type="HOGENOM" id="CLU_128147_0_0_9"/>
<dbReference type="Proteomes" id="UP000001578">
    <property type="component" value="Chromosome"/>
</dbReference>
<dbReference type="CDD" id="cd04888">
    <property type="entry name" value="ACT_PheB-BS"/>
    <property type="match status" value="1"/>
</dbReference>
<dbReference type="Gene3D" id="3.30.70.260">
    <property type="match status" value="1"/>
</dbReference>
<dbReference type="HAMAP" id="MF_00707">
    <property type="entry name" value="UPF0735"/>
    <property type="match status" value="1"/>
</dbReference>
<dbReference type="InterPro" id="IPR045865">
    <property type="entry name" value="ACT-like_dom_sf"/>
</dbReference>
<dbReference type="InterPro" id="IPR002912">
    <property type="entry name" value="ACT_dom"/>
</dbReference>
<dbReference type="InterPro" id="IPR008310">
    <property type="entry name" value="UPF0735_ACT_dom-cont"/>
</dbReference>
<dbReference type="NCBIfam" id="NF003361">
    <property type="entry name" value="PRK04435.1"/>
    <property type="match status" value="1"/>
</dbReference>
<dbReference type="Pfam" id="PF01842">
    <property type="entry name" value="ACT"/>
    <property type="match status" value="1"/>
</dbReference>
<dbReference type="PIRSF" id="PIRSF025624">
    <property type="entry name" value="ACT_PheB"/>
    <property type="match status" value="1"/>
</dbReference>
<dbReference type="SUPFAM" id="SSF55021">
    <property type="entry name" value="ACT-like"/>
    <property type="match status" value="1"/>
</dbReference>
<dbReference type="PROSITE" id="PS51671">
    <property type="entry name" value="ACT"/>
    <property type="match status" value="1"/>
</dbReference>
<feature type="chain" id="PRO_0000366313" description="UPF0735 ACT domain-containing protein GTNG_2535">
    <location>
        <begin position="1"/>
        <end position="147"/>
    </location>
</feature>
<feature type="domain" description="ACT" evidence="1">
    <location>
        <begin position="69"/>
        <end position="144"/>
    </location>
</feature>
<proteinExistence type="inferred from homology"/>